<dbReference type="EC" id="6.3.4.-" evidence="1"/>
<dbReference type="EMBL" id="CP000673">
    <property type="protein sequence ID" value="EDK33431.1"/>
    <property type="molecule type" value="Genomic_DNA"/>
</dbReference>
<dbReference type="RefSeq" id="WP_012101778.1">
    <property type="nucleotide sequence ID" value="NC_009706.1"/>
</dbReference>
<dbReference type="SMR" id="A5N800"/>
<dbReference type="STRING" id="431943.CKL_1389"/>
<dbReference type="KEGG" id="ckl:CKL_1389"/>
<dbReference type="eggNOG" id="COG1323">
    <property type="taxonomic scope" value="Bacteria"/>
</dbReference>
<dbReference type="HOGENOM" id="CLU_038915_0_1_9"/>
<dbReference type="Proteomes" id="UP000002411">
    <property type="component" value="Chromosome"/>
</dbReference>
<dbReference type="GO" id="GO:0005737">
    <property type="term" value="C:cytoplasm"/>
    <property type="evidence" value="ECO:0007669"/>
    <property type="project" value="UniProtKB-SubCell"/>
</dbReference>
<dbReference type="GO" id="GO:0005524">
    <property type="term" value="F:ATP binding"/>
    <property type="evidence" value="ECO:0007669"/>
    <property type="project" value="UniProtKB-KW"/>
</dbReference>
<dbReference type="GO" id="GO:0016879">
    <property type="term" value="F:ligase activity, forming carbon-nitrogen bonds"/>
    <property type="evidence" value="ECO:0007669"/>
    <property type="project" value="UniProtKB-UniRule"/>
</dbReference>
<dbReference type="GO" id="GO:0000049">
    <property type="term" value="F:tRNA binding"/>
    <property type="evidence" value="ECO:0007669"/>
    <property type="project" value="UniProtKB-KW"/>
</dbReference>
<dbReference type="GO" id="GO:0006400">
    <property type="term" value="P:tRNA modification"/>
    <property type="evidence" value="ECO:0007669"/>
    <property type="project" value="UniProtKB-UniRule"/>
</dbReference>
<dbReference type="Gene3D" id="3.40.50.620">
    <property type="entry name" value="HUPs"/>
    <property type="match status" value="1"/>
</dbReference>
<dbReference type="HAMAP" id="MF_01539">
    <property type="entry name" value="TmcAL"/>
    <property type="match status" value="1"/>
</dbReference>
<dbReference type="InterPro" id="IPR014729">
    <property type="entry name" value="Rossmann-like_a/b/a_fold"/>
</dbReference>
<dbReference type="InterPro" id="IPR008513">
    <property type="entry name" value="tRNA(Met)_cyd_acetate_ligase"/>
</dbReference>
<dbReference type="NCBIfam" id="NF010191">
    <property type="entry name" value="PRK13670.1"/>
    <property type="match status" value="1"/>
</dbReference>
<dbReference type="PANTHER" id="PTHR37825">
    <property type="entry name" value="TRNA(MET) CYTIDINE ACETATE LIGASE"/>
    <property type="match status" value="1"/>
</dbReference>
<dbReference type="PANTHER" id="PTHR37825:SF1">
    <property type="entry name" value="TRNA(MET) CYTIDINE ACETATE LIGASE"/>
    <property type="match status" value="1"/>
</dbReference>
<dbReference type="Pfam" id="PF05636">
    <property type="entry name" value="HIGH_NTase1"/>
    <property type="match status" value="1"/>
</dbReference>
<dbReference type="SUPFAM" id="SSF52374">
    <property type="entry name" value="Nucleotidylyl transferase"/>
    <property type="match status" value="1"/>
</dbReference>
<sequence length="408" mass="46610">MKITGIIVEYNPFHNGHKYHIKKTRSLTNCEGIIAVISGNFVQRGAPSIVDKWNKTKMALLNGVDLVLELPALYSLSSAEFFAYGAVSLLENLGVVKNLCFGSECEDIKLLTLMGKILYEEPEELKLTLKERLHQGMSYASARGNALKEFLCHRYSLKNNSITEMLHLPNNILAIEYCKSLARLKSTINPVSIKRIGNSYNSTYINNRFSSATSIRNFLKENNSLQELEKALPYNILCILKDLSHSNYRFTFEDSLLPYLKYKNLFYGKNIKYLPDVSEGLENRIESALKNASSYDQIINYAKTKRYAYSRISRILCQFFLGFENLDTKVLRKNRCPYARVLGFNNKGMEILKKIKQNSSIPVYTKLPKNANDMLKLDLMATKGYSLLNKNIAFNQDYISSPLIIDKI</sequence>
<feature type="chain" id="PRO_1000087621" description="tRNA(Met) cytidine acetate ligase">
    <location>
        <begin position="1"/>
        <end position="408"/>
    </location>
</feature>
<feature type="binding site" evidence="1">
    <location>
        <begin position="7"/>
        <end position="20"/>
    </location>
    <ligand>
        <name>ATP</name>
        <dbReference type="ChEBI" id="CHEBI:30616"/>
    </ligand>
</feature>
<feature type="binding site" evidence="1">
    <location>
        <position position="102"/>
    </location>
    <ligand>
        <name>ATP</name>
        <dbReference type="ChEBI" id="CHEBI:30616"/>
    </ligand>
</feature>
<feature type="binding site" evidence="1">
    <location>
        <position position="170"/>
    </location>
    <ligand>
        <name>ATP</name>
        <dbReference type="ChEBI" id="CHEBI:30616"/>
    </ligand>
</feature>
<feature type="binding site" evidence="1">
    <location>
        <begin position="195"/>
        <end position="196"/>
    </location>
    <ligand>
        <name>ATP</name>
        <dbReference type="ChEBI" id="CHEBI:30616"/>
    </ligand>
</feature>
<accession>A5N800</accession>
<organism>
    <name type="scientific">Clostridium kluyveri (strain ATCC 8527 / DSM 555 / NBRC 12016 / NCIMB 10680 / K1)</name>
    <dbReference type="NCBI Taxonomy" id="431943"/>
    <lineage>
        <taxon>Bacteria</taxon>
        <taxon>Bacillati</taxon>
        <taxon>Bacillota</taxon>
        <taxon>Clostridia</taxon>
        <taxon>Eubacteriales</taxon>
        <taxon>Clostridiaceae</taxon>
        <taxon>Clostridium</taxon>
    </lineage>
</organism>
<protein>
    <recommendedName>
        <fullName evidence="1">tRNA(Met) cytidine acetate ligase</fullName>
        <ecNumber evidence="1">6.3.4.-</ecNumber>
    </recommendedName>
</protein>
<evidence type="ECO:0000255" key="1">
    <source>
        <dbReference type="HAMAP-Rule" id="MF_01539"/>
    </source>
</evidence>
<keyword id="KW-0067">ATP-binding</keyword>
<keyword id="KW-0963">Cytoplasm</keyword>
<keyword id="KW-0436">Ligase</keyword>
<keyword id="KW-0547">Nucleotide-binding</keyword>
<keyword id="KW-1185">Reference proteome</keyword>
<keyword id="KW-0694">RNA-binding</keyword>
<keyword id="KW-0819">tRNA processing</keyword>
<keyword id="KW-0820">tRNA-binding</keyword>
<gene>
    <name evidence="1" type="primary">tmcAL</name>
    <name type="ordered locus">CKL_1389</name>
</gene>
<name>TMCAL_CLOK5</name>
<proteinExistence type="inferred from homology"/>
<comment type="function">
    <text evidence="1">Catalyzes the formation of N(4)-acetylcytidine (ac(4)C) at the wobble position of elongator tRNA(Met), using acetate and ATP as substrates. First activates an acetate ion to form acetyladenylate (Ac-AMP) and then transfers the acetyl group to tRNA to form ac(4)C34.</text>
</comment>
<comment type="catalytic activity">
    <reaction evidence="1">
        <text>cytidine(34) in elongator tRNA(Met) + acetate + ATP = N(4)-acetylcytidine(34) in elongator tRNA(Met) + AMP + diphosphate</text>
        <dbReference type="Rhea" id="RHEA:58144"/>
        <dbReference type="Rhea" id="RHEA-COMP:10693"/>
        <dbReference type="Rhea" id="RHEA-COMP:10694"/>
        <dbReference type="ChEBI" id="CHEBI:30089"/>
        <dbReference type="ChEBI" id="CHEBI:30616"/>
        <dbReference type="ChEBI" id="CHEBI:33019"/>
        <dbReference type="ChEBI" id="CHEBI:74900"/>
        <dbReference type="ChEBI" id="CHEBI:82748"/>
        <dbReference type="ChEBI" id="CHEBI:456215"/>
    </reaction>
</comment>
<comment type="subcellular location">
    <subcellularLocation>
        <location evidence="1">Cytoplasm</location>
    </subcellularLocation>
</comment>
<comment type="similarity">
    <text evidence="1">Belongs to the TmcAL family.</text>
</comment>
<reference key="1">
    <citation type="journal article" date="2008" name="Proc. Natl. Acad. Sci. U.S.A.">
        <title>The genome of Clostridium kluyveri, a strict anaerobe with unique metabolic features.</title>
        <authorList>
            <person name="Seedorf H."/>
            <person name="Fricke W.F."/>
            <person name="Veith B."/>
            <person name="Brueggemann H."/>
            <person name="Liesegang H."/>
            <person name="Strittmatter A."/>
            <person name="Miethke M."/>
            <person name="Buckel W."/>
            <person name="Hinderberger J."/>
            <person name="Li F."/>
            <person name="Hagemeier C."/>
            <person name="Thauer R.K."/>
            <person name="Gottschalk G."/>
        </authorList>
    </citation>
    <scope>NUCLEOTIDE SEQUENCE [LARGE SCALE GENOMIC DNA]</scope>
    <source>
        <strain>ATCC 8527 / DSM 555 / NBRC 12016 / NCIMB 10680 / K1</strain>
    </source>
</reference>